<keyword id="KW-0030">Aminoacyl-tRNA synthetase</keyword>
<keyword id="KW-0067">ATP-binding</keyword>
<keyword id="KW-0963">Cytoplasm</keyword>
<keyword id="KW-0436">Ligase</keyword>
<keyword id="KW-0547">Nucleotide-binding</keyword>
<keyword id="KW-0648">Protein biosynthesis</keyword>
<evidence type="ECO:0000255" key="1">
    <source>
        <dbReference type="HAMAP-Rule" id="MF_00049"/>
    </source>
</evidence>
<accession>C5BGC7</accession>
<proteinExistence type="inferred from homology"/>
<organism>
    <name type="scientific">Edwardsiella ictaluri (strain 93-146)</name>
    <dbReference type="NCBI Taxonomy" id="634503"/>
    <lineage>
        <taxon>Bacteria</taxon>
        <taxon>Pseudomonadati</taxon>
        <taxon>Pseudomonadota</taxon>
        <taxon>Gammaproteobacteria</taxon>
        <taxon>Enterobacterales</taxon>
        <taxon>Hafniaceae</taxon>
        <taxon>Edwardsiella</taxon>
    </lineage>
</organism>
<gene>
    <name evidence="1" type="primary">leuS</name>
    <name type="ordered locus">NT01EI_2936</name>
</gene>
<feature type="chain" id="PRO_1000202219" description="Leucine--tRNA ligase">
    <location>
        <begin position="1"/>
        <end position="860"/>
    </location>
</feature>
<feature type="short sequence motif" description="'HIGH' region">
    <location>
        <begin position="42"/>
        <end position="52"/>
    </location>
</feature>
<feature type="short sequence motif" description="'KMSKS' region">
    <location>
        <begin position="619"/>
        <end position="623"/>
    </location>
</feature>
<feature type="binding site" evidence="1">
    <location>
        <position position="622"/>
    </location>
    <ligand>
        <name>ATP</name>
        <dbReference type="ChEBI" id="CHEBI:30616"/>
    </ligand>
</feature>
<name>SYL_EDWI9</name>
<dbReference type="EC" id="6.1.1.4" evidence="1"/>
<dbReference type="EMBL" id="CP001600">
    <property type="protein sequence ID" value="ACR70090.1"/>
    <property type="molecule type" value="Genomic_DNA"/>
</dbReference>
<dbReference type="RefSeq" id="WP_015872184.1">
    <property type="nucleotide sequence ID" value="NZ_CP169062.1"/>
</dbReference>
<dbReference type="SMR" id="C5BGC7"/>
<dbReference type="STRING" id="67780.B6E78_06585"/>
<dbReference type="GeneID" id="69539819"/>
<dbReference type="KEGG" id="eic:NT01EI_2936"/>
<dbReference type="PATRIC" id="fig|634503.3.peg.2623"/>
<dbReference type="HOGENOM" id="CLU_004427_0_0_6"/>
<dbReference type="OrthoDB" id="9810365at2"/>
<dbReference type="Proteomes" id="UP000001485">
    <property type="component" value="Chromosome"/>
</dbReference>
<dbReference type="GO" id="GO:0005829">
    <property type="term" value="C:cytosol"/>
    <property type="evidence" value="ECO:0007669"/>
    <property type="project" value="TreeGrafter"/>
</dbReference>
<dbReference type="GO" id="GO:0002161">
    <property type="term" value="F:aminoacyl-tRNA deacylase activity"/>
    <property type="evidence" value="ECO:0007669"/>
    <property type="project" value="InterPro"/>
</dbReference>
<dbReference type="GO" id="GO:0005524">
    <property type="term" value="F:ATP binding"/>
    <property type="evidence" value="ECO:0007669"/>
    <property type="project" value="UniProtKB-UniRule"/>
</dbReference>
<dbReference type="GO" id="GO:0004823">
    <property type="term" value="F:leucine-tRNA ligase activity"/>
    <property type="evidence" value="ECO:0007669"/>
    <property type="project" value="UniProtKB-UniRule"/>
</dbReference>
<dbReference type="GO" id="GO:0006429">
    <property type="term" value="P:leucyl-tRNA aminoacylation"/>
    <property type="evidence" value="ECO:0007669"/>
    <property type="project" value="UniProtKB-UniRule"/>
</dbReference>
<dbReference type="CDD" id="cd07958">
    <property type="entry name" value="Anticodon_Ia_Leu_BEm"/>
    <property type="match status" value="1"/>
</dbReference>
<dbReference type="CDD" id="cd00812">
    <property type="entry name" value="LeuRS_core"/>
    <property type="match status" value="1"/>
</dbReference>
<dbReference type="FunFam" id="1.10.730.10:FF:000002">
    <property type="entry name" value="Leucine--tRNA ligase"/>
    <property type="match status" value="2"/>
</dbReference>
<dbReference type="FunFam" id="2.20.28.290:FF:000001">
    <property type="entry name" value="Leucine--tRNA ligase"/>
    <property type="match status" value="1"/>
</dbReference>
<dbReference type="FunFam" id="3.10.20.590:FF:000001">
    <property type="entry name" value="Leucine--tRNA ligase"/>
    <property type="match status" value="1"/>
</dbReference>
<dbReference type="FunFam" id="3.40.50.620:FF:000003">
    <property type="entry name" value="Leucine--tRNA ligase"/>
    <property type="match status" value="1"/>
</dbReference>
<dbReference type="FunFam" id="3.40.50.620:FF:000124">
    <property type="entry name" value="Leucine--tRNA ligase"/>
    <property type="match status" value="1"/>
</dbReference>
<dbReference type="FunFam" id="3.90.740.10:FF:000012">
    <property type="entry name" value="Leucine--tRNA ligase"/>
    <property type="match status" value="1"/>
</dbReference>
<dbReference type="Gene3D" id="2.20.28.290">
    <property type="match status" value="1"/>
</dbReference>
<dbReference type="Gene3D" id="3.10.20.590">
    <property type="match status" value="1"/>
</dbReference>
<dbReference type="Gene3D" id="3.40.50.620">
    <property type="entry name" value="HUPs"/>
    <property type="match status" value="2"/>
</dbReference>
<dbReference type="Gene3D" id="1.10.730.10">
    <property type="entry name" value="Isoleucyl-tRNA Synthetase, Domain 1"/>
    <property type="match status" value="1"/>
</dbReference>
<dbReference type="Gene3D" id="3.90.740.10">
    <property type="entry name" value="Valyl/Leucyl/Isoleucyl-tRNA synthetase, editing domain"/>
    <property type="match status" value="1"/>
</dbReference>
<dbReference type="HAMAP" id="MF_00049_B">
    <property type="entry name" value="Leu_tRNA_synth_B"/>
    <property type="match status" value="1"/>
</dbReference>
<dbReference type="InterPro" id="IPR001412">
    <property type="entry name" value="aa-tRNA-synth_I_CS"/>
</dbReference>
<dbReference type="InterPro" id="IPR002300">
    <property type="entry name" value="aa-tRNA-synth_Ia"/>
</dbReference>
<dbReference type="InterPro" id="IPR002302">
    <property type="entry name" value="Leu-tRNA-ligase"/>
</dbReference>
<dbReference type="InterPro" id="IPR025709">
    <property type="entry name" value="Leu_tRNA-synth_edit"/>
</dbReference>
<dbReference type="InterPro" id="IPR013155">
    <property type="entry name" value="M/V/L/I-tRNA-synth_anticd-bd"/>
</dbReference>
<dbReference type="InterPro" id="IPR015413">
    <property type="entry name" value="Methionyl/Leucyl_tRNA_Synth"/>
</dbReference>
<dbReference type="InterPro" id="IPR014729">
    <property type="entry name" value="Rossmann-like_a/b/a_fold"/>
</dbReference>
<dbReference type="InterPro" id="IPR009080">
    <property type="entry name" value="tRNAsynth_Ia_anticodon-bd"/>
</dbReference>
<dbReference type="InterPro" id="IPR009008">
    <property type="entry name" value="Val/Leu/Ile-tRNA-synth_edit"/>
</dbReference>
<dbReference type="NCBIfam" id="TIGR00396">
    <property type="entry name" value="leuS_bact"/>
    <property type="match status" value="1"/>
</dbReference>
<dbReference type="PANTHER" id="PTHR43740:SF2">
    <property type="entry name" value="LEUCINE--TRNA LIGASE, MITOCHONDRIAL"/>
    <property type="match status" value="1"/>
</dbReference>
<dbReference type="PANTHER" id="PTHR43740">
    <property type="entry name" value="LEUCYL-TRNA SYNTHETASE"/>
    <property type="match status" value="1"/>
</dbReference>
<dbReference type="Pfam" id="PF08264">
    <property type="entry name" value="Anticodon_1"/>
    <property type="match status" value="1"/>
</dbReference>
<dbReference type="Pfam" id="PF00133">
    <property type="entry name" value="tRNA-synt_1"/>
    <property type="match status" value="2"/>
</dbReference>
<dbReference type="Pfam" id="PF13603">
    <property type="entry name" value="tRNA-synt_1_2"/>
    <property type="match status" value="1"/>
</dbReference>
<dbReference type="Pfam" id="PF09334">
    <property type="entry name" value="tRNA-synt_1g"/>
    <property type="match status" value="1"/>
</dbReference>
<dbReference type="PRINTS" id="PR00985">
    <property type="entry name" value="TRNASYNTHLEU"/>
</dbReference>
<dbReference type="SUPFAM" id="SSF47323">
    <property type="entry name" value="Anticodon-binding domain of a subclass of class I aminoacyl-tRNA synthetases"/>
    <property type="match status" value="1"/>
</dbReference>
<dbReference type="SUPFAM" id="SSF52374">
    <property type="entry name" value="Nucleotidylyl transferase"/>
    <property type="match status" value="1"/>
</dbReference>
<dbReference type="SUPFAM" id="SSF50677">
    <property type="entry name" value="ValRS/IleRS/LeuRS editing domain"/>
    <property type="match status" value="1"/>
</dbReference>
<dbReference type="PROSITE" id="PS00178">
    <property type="entry name" value="AA_TRNA_LIGASE_I"/>
    <property type="match status" value="1"/>
</dbReference>
<protein>
    <recommendedName>
        <fullName evidence="1">Leucine--tRNA ligase</fullName>
        <ecNumber evidence="1">6.1.1.4</ecNumber>
    </recommendedName>
    <alternativeName>
        <fullName evidence="1">Leucyl-tRNA synthetase</fullName>
        <shortName evidence="1">LeuRS</shortName>
    </alternativeName>
</protein>
<comment type="catalytic activity">
    <reaction evidence="1">
        <text>tRNA(Leu) + L-leucine + ATP = L-leucyl-tRNA(Leu) + AMP + diphosphate</text>
        <dbReference type="Rhea" id="RHEA:11688"/>
        <dbReference type="Rhea" id="RHEA-COMP:9613"/>
        <dbReference type="Rhea" id="RHEA-COMP:9622"/>
        <dbReference type="ChEBI" id="CHEBI:30616"/>
        <dbReference type="ChEBI" id="CHEBI:33019"/>
        <dbReference type="ChEBI" id="CHEBI:57427"/>
        <dbReference type="ChEBI" id="CHEBI:78442"/>
        <dbReference type="ChEBI" id="CHEBI:78494"/>
        <dbReference type="ChEBI" id="CHEBI:456215"/>
        <dbReference type="EC" id="6.1.1.4"/>
    </reaction>
</comment>
<comment type="subcellular location">
    <subcellularLocation>
        <location evidence="1">Cytoplasm</location>
    </subcellularLocation>
</comment>
<comment type="similarity">
    <text evidence="1">Belongs to the class-I aminoacyl-tRNA synthetase family.</text>
</comment>
<sequence>MQEQYRPEDIESHVQRHWDEQKTFQVTEDAGKEKYYCLSMLPYPSGRLHMGHVRNYTIGDVISRYQRMLGKNVLQPIGWDAFGLPAEGAAVKNNTAPAPWTYANIDYMKNQLKLLGFGYDWSREIATCKPDYYRWEQWFFTKLYEKGLVYKKTSAVNWCPNDQTVLANEQVIDGCCWRCDSKVERKEIPQWFIKITDYADQLLNDLDRLEEWPEQVKTMQRNWIGRSEGVEITFHVADRDDTFAVYTTRPDTFMGVSYLAIAAAHPLAQQAATGNPALTQFIDECKNTKVAEADMATMEKKGMATGLYAIHPLNGERLPIWVANFVLMDYGTGAVMSVPAHDQRDWEFATRYDLPMKPVILTADGQAPDIRAAAMTDKGVLFNSGEFDGLDFSAAFDAVANRLIAAGVGERKVNYRLRDWGVSRQRYWGAPIPMMTLEDGSVIPTPEEQLPVILPEDVVMNGITSPIKADPSWAKTTVNGQPALRETDTFDTFMESSWYYARYTCPQFDQGMLDPQAANYWLPVDQYVGGIEHAIMHLMYFRFFHKLMRDAGLVDSDEPAKRLLCQGMVLADAFYYTGTNGERNWVSPVDVTVERDDKGRITQATDRDGRELVYAGMSKMSKSKNNGIDPQVMVERYGADTVRLFMMFASPAEMTLEWQESGVEGANRFLKRVWKLAFDHQQKGLASALDLTALNDDQKALRRDLHKTIAKVSDDIGRRQTFNTAIAAVMELMNKLTRAPQESEQDRALMQEALLAVVRMLYPFTPHVCFTLWRALGGAGDIDTAPWPVADDAAMVEDSKLIVVQVNGKVRGKITVAADASEEQVRALAAQEPLVAKYLDGVTVRKVIFVPGKLLNLVVG</sequence>
<reference key="1">
    <citation type="submission" date="2009-03" db="EMBL/GenBank/DDBJ databases">
        <title>Complete genome sequence of Edwardsiella ictaluri 93-146.</title>
        <authorList>
            <person name="Williams M.L."/>
            <person name="Gillaspy A.F."/>
            <person name="Dyer D.W."/>
            <person name="Thune R.L."/>
            <person name="Waldbieser G.C."/>
            <person name="Schuster S.C."/>
            <person name="Gipson J."/>
            <person name="Zaitshik J."/>
            <person name="Landry C."/>
            <person name="Lawrence M.L."/>
        </authorList>
    </citation>
    <scope>NUCLEOTIDE SEQUENCE [LARGE SCALE GENOMIC DNA]</scope>
    <source>
        <strain>93-146</strain>
    </source>
</reference>